<dbReference type="EMBL" id="CP001401">
    <property type="protein sequence ID" value="ACP56520.1"/>
    <property type="molecule type" value="Genomic_DNA"/>
</dbReference>
<dbReference type="RefSeq" id="WP_012712542.1">
    <property type="nucleotide sequence ID" value="NC_012632.1"/>
</dbReference>
<dbReference type="KEGG" id="sim:M1627_2683"/>
<dbReference type="HOGENOM" id="CLU_172276_0_0_2"/>
<dbReference type="Proteomes" id="UP000002307">
    <property type="component" value="Chromosome"/>
</dbReference>
<dbReference type="HAMAP" id="MF_01245">
    <property type="entry name" value="UPF0248"/>
    <property type="match status" value="1"/>
</dbReference>
<dbReference type="InterPro" id="IPR040459">
    <property type="entry name" value="MJ1316"/>
</dbReference>
<dbReference type="InterPro" id="IPR007547">
    <property type="entry name" value="UPF0248"/>
</dbReference>
<dbReference type="Pfam" id="PF04457">
    <property type="entry name" value="MJ1316"/>
    <property type="match status" value="1"/>
</dbReference>
<gene>
    <name type="ordered locus">M1627_2683</name>
</gene>
<proteinExistence type="inferred from homology"/>
<feature type="chain" id="PRO_1000214093" description="UPF0248 protein M1627_2683">
    <location>
        <begin position="1"/>
        <end position="80"/>
    </location>
</feature>
<name>Y2683_SACI3</name>
<comment type="similarity">
    <text evidence="1">Belongs to the UPF0248 family.</text>
</comment>
<evidence type="ECO:0000255" key="1">
    <source>
        <dbReference type="HAMAP-Rule" id="MF_01245"/>
    </source>
</evidence>
<reference key="1">
    <citation type="journal article" date="2009" name="Proc. Natl. Acad. Sci. U.S.A.">
        <title>Biogeography of the Sulfolobus islandicus pan-genome.</title>
        <authorList>
            <person name="Reno M.L."/>
            <person name="Held N.L."/>
            <person name="Fields C.J."/>
            <person name="Burke P.V."/>
            <person name="Whitaker R.J."/>
        </authorList>
    </citation>
    <scope>NUCLEOTIDE SEQUENCE [LARGE SCALE GENOMIC DNA]</scope>
    <source>
        <strain>M.16.27</strain>
    </source>
</reference>
<protein>
    <recommendedName>
        <fullName evidence="1">UPF0248 protein M1627_2683</fullName>
    </recommendedName>
</protein>
<organism>
    <name type="scientific">Saccharolobus islandicus (strain M.16.27)</name>
    <name type="common">Sulfolobus islandicus</name>
    <dbReference type="NCBI Taxonomy" id="427318"/>
    <lineage>
        <taxon>Archaea</taxon>
        <taxon>Thermoproteota</taxon>
        <taxon>Thermoprotei</taxon>
        <taxon>Sulfolobales</taxon>
        <taxon>Sulfolobaceae</taxon>
        <taxon>Saccharolobus</taxon>
    </lineage>
</organism>
<accession>C3N323</accession>
<sequence>MKIKDAVNMIRWKYREKIDDYVVIIIDRLTENGLKEISFSEIDDVDNNYLYLKSEENTVIPLHRVLMIKRKSDNALIWKR</sequence>